<evidence type="ECO:0000250" key="1"/>
<evidence type="ECO:0000255" key="2">
    <source>
        <dbReference type="PROSITE-ProRule" id="PRU00448"/>
    </source>
</evidence>
<evidence type="ECO:0000305" key="3"/>
<name>CML15_ARATH</name>
<gene>
    <name type="primary">CML15</name>
    <name type="ordered locus">At1g18530</name>
    <name type="ORF">F25I16.13</name>
</gene>
<organism>
    <name type="scientific">Arabidopsis thaliana</name>
    <name type="common">Mouse-ear cress</name>
    <dbReference type="NCBI Taxonomy" id="3702"/>
    <lineage>
        <taxon>Eukaryota</taxon>
        <taxon>Viridiplantae</taxon>
        <taxon>Streptophyta</taxon>
        <taxon>Embryophyta</taxon>
        <taxon>Tracheophyta</taxon>
        <taxon>Spermatophyta</taxon>
        <taxon>Magnoliopsida</taxon>
        <taxon>eudicotyledons</taxon>
        <taxon>Gunneridae</taxon>
        <taxon>Pentapetalae</taxon>
        <taxon>rosids</taxon>
        <taxon>malvids</taxon>
        <taxon>Brassicales</taxon>
        <taxon>Brassicaceae</taxon>
        <taxon>Camelineae</taxon>
        <taxon>Arabidopsis</taxon>
    </lineage>
</organism>
<comment type="function">
    <text evidence="1">Potential calcium sensor.</text>
</comment>
<comment type="caution">
    <text evidence="3">Although assigned as a calmodulin family member by Ref.4, it only contains EF-hand domains.</text>
</comment>
<feature type="chain" id="PRO_0000342945" description="Probable calcium-binding protein CML15">
    <location>
        <begin position="1"/>
        <end position="157"/>
    </location>
</feature>
<feature type="domain" description="EF-hand 1" evidence="2">
    <location>
        <begin position="3"/>
        <end position="38"/>
    </location>
</feature>
<feature type="domain" description="EF-hand 2" evidence="2">
    <location>
        <begin position="39"/>
        <end position="74"/>
    </location>
</feature>
<feature type="domain" description="EF-hand 3" evidence="2">
    <location>
        <begin position="78"/>
        <end position="113"/>
    </location>
</feature>
<feature type="domain" description="EF-hand 4" evidence="2">
    <location>
        <begin position="114"/>
        <end position="149"/>
    </location>
</feature>
<feature type="binding site" evidence="2">
    <location>
        <position position="16"/>
    </location>
    <ligand>
        <name>Ca(2+)</name>
        <dbReference type="ChEBI" id="CHEBI:29108"/>
        <label>1</label>
    </ligand>
</feature>
<feature type="binding site" evidence="2">
    <location>
        <position position="18"/>
    </location>
    <ligand>
        <name>Ca(2+)</name>
        <dbReference type="ChEBI" id="CHEBI:29108"/>
        <label>1</label>
    </ligand>
</feature>
<feature type="binding site" evidence="2">
    <location>
        <position position="20"/>
    </location>
    <ligand>
        <name>Ca(2+)</name>
        <dbReference type="ChEBI" id="CHEBI:29108"/>
        <label>1</label>
    </ligand>
</feature>
<feature type="binding site" evidence="2">
    <location>
        <position position="22"/>
    </location>
    <ligand>
        <name>Ca(2+)</name>
        <dbReference type="ChEBI" id="CHEBI:29108"/>
        <label>1</label>
    </ligand>
</feature>
<feature type="binding site" evidence="2">
    <location>
        <position position="27"/>
    </location>
    <ligand>
        <name>Ca(2+)</name>
        <dbReference type="ChEBI" id="CHEBI:29108"/>
        <label>1</label>
    </ligand>
</feature>
<feature type="binding site" evidence="2">
    <location>
        <position position="52"/>
    </location>
    <ligand>
        <name>Ca(2+)</name>
        <dbReference type="ChEBI" id="CHEBI:29108"/>
        <label>2</label>
    </ligand>
</feature>
<feature type="binding site" evidence="2">
    <location>
        <position position="54"/>
    </location>
    <ligand>
        <name>Ca(2+)</name>
        <dbReference type="ChEBI" id="CHEBI:29108"/>
        <label>2</label>
    </ligand>
</feature>
<feature type="binding site" evidence="2">
    <location>
        <position position="56"/>
    </location>
    <ligand>
        <name>Ca(2+)</name>
        <dbReference type="ChEBI" id="CHEBI:29108"/>
        <label>2</label>
    </ligand>
</feature>
<feature type="binding site" evidence="2">
    <location>
        <position position="63"/>
    </location>
    <ligand>
        <name>Ca(2+)</name>
        <dbReference type="ChEBI" id="CHEBI:29108"/>
        <label>2</label>
    </ligand>
</feature>
<feature type="binding site" evidence="2">
    <location>
        <position position="91"/>
    </location>
    <ligand>
        <name>Ca(2+)</name>
        <dbReference type="ChEBI" id="CHEBI:29108"/>
        <label>3</label>
    </ligand>
</feature>
<feature type="binding site" evidence="2">
    <location>
        <position position="93"/>
    </location>
    <ligand>
        <name>Ca(2+)</name>
        <dbReference type="ChEBI" id="CHEBI:29108"/>
        <label>3</label>
    </ligand>
</feature>
<feature type="binding site" evidence="2">
    <location>
        <position position="95"/>
    </location>
    <ligand>
        <name>Ca(2+)</name>
        <dbReference type="ChEBI" id="CHEBI:29108"/>
        <label>3</label>
    </ligand>
</feature>
<feature type="binding site" evidence="2">
    <location>
        <position position="102"/>
    </location>
    <ligand>
        <name>Ca(2+)</name>
        <dbReference type="ChEBI" id="CHEBI:29108"/>
        <label>3</label>
    </ligand>
</feature>
<feature type="binding site" evidence="2">
    <location>
        <position position="127"/>
    </location>
    <ligand>
        <name>Ca(2+)</name>
        <dbReference type="ChEBI" id="CHEBI:29108"/>
        <label>4</label>
    </ligand>
</feature>
<feature type="binding site" evidence="2">
    <location>
        <position position="129"/>
    </location>
    <ligand>
        <name>Ca(2+)</name>
        <dbReference type="ChEBI" id="CHEBI:29108"/>
        <label>4</label>
    </ligand>
</feature>
<feature type="binding site" evidence="2">
    <location>
        <position position="131"/>
    </location>
    <ligand>
        <name>Ca(2+)</name>
        <dbReference type="ChEBI" id="CHEBI:29108"/>
        <label>4</label>
    </ligand>
</feature>
<feature type="binding site" evidence="2">
    <location>
        <position position="138"/>
    </location>
    <ligand>
        <name>Ca(2+)</name>
        <dbReference type="ChEBI" id="CHEBI:29108"/>
        <label>4</label>
    </ligand>
</feature>
<accession>Q9FZ75</accession>
<sequence>MEDQIRQLKDIFDRFDMDADGSLTILELAALLRSLGLKPSGDQIHVLLASMDSNGNGFVEFDELVGTILPDLNEEVLINSEQLLEIFKSFDRDGNGFISAAELAGAMAKMGQPLTYKELTEMIKEADTNGDGVISFGEFASIMAKSAVDYFGLKINS</sequence>
<keyword id="KW-0106">Calcium</keyword>
<keyword id="KW-0479">Metal-binding</keyword>
<keyword id="KW-1185">Reference proteome</keyword>
<keyword id="KW-0677">Repeat</keyword>
<dbReference type="EMBL" id="AC026238">
    <property type="protein sequence ID" value="AAF98421.1"/>
    <property type="molecule type" value="Genomic_DNA"/>
</dbReference>
<dbReference type="EMBL" id="CP002684">
    <property type="protein sequence ID" value="AEE29726.1"/>
    <property type="molecule type" value="Genomic_DNA"/>
</dbReference>
<dbReference type="EMBL" id="DQ056456">
    <property type="protein sequence ID" value="AAY78613.1"/>
    <property type="molecule type" value="mRNA"/>
</dbReference>
<dbReference type="PIR" id="G86318">
    <property type="entry name" value="G86318"/>
</dbReference>
<dbReference type="RefSeq" id="NP_173288.1">
    <property type="nucleotide sequence ID" value="NM_101711.2"/>
</dbReference>
<dbReference type="SMR" id="Q9FZ75"/>
<dbReference type="FunCoup" id="Q9FZ75">
    <property type="interactions" value="202"/>
</dbReference>
<dbReference type="STRING" id="3702.Q9FZ75"/>
<dbReference type="PaxDb" id="3702-AT1G18530.1"/>
<dbReference type="ProteomicsDB" id="240990"/>
<dbReference type="EnsemblPlants" id="AT1G18530.1">
    <property type="protein sequence ID" value="AT1G18530.1"/>
    <property type="gene ID" value="AT1G18530"/>
</dbReference>
<dbReference type="GeneID" id="838434"/>
<dbReference type="Gramene" id="AT1G18530.1">
    <property type="protein sequence ID" value="AT1G18530.1"/>
    <property type="gene ID" value="AT1G18530"/>
</dbReference>
<dbReference type="KEGG" id="ath:AT1G18530"/>
<dbReference type="Araport" id="AT1G18530"/>
<dbReference type="TAIR" id="AT1G18530">
    <property type="gene designation" value="CML15"/>
</dbReference>
<dbReference type="eggNOG" id="KOG0027">
    <property type="taxonomic scope" value="Eukaryota"/>
</dbReference>
<dbReference type="HOGENOM" id="CLU_061288_2_2_1"/>
<dbReference type="InParanoid" id="Q9FZ75"/>
<dbReference type="OMA" id="PREDRVH"/>
<dbReference type="OrthoDB" id="26525at2759"/>
<dbReference type="PhylomeDB" id="Q9FZ75"/>
<dbReference type="PRO" id="PR:Q9FZ75"/>
<dbReference type="Proteomes" id="UP000006548">
    <property type="component" value="Chromosome 1"/>
</dbReference>
<dbReference type="ExpressionAtlas" id="Q9FZ75">
    <property type="expression patterns" value="differential"/>
</dbReference>
<dbReference type="GO" id="GO:0005509">
    <property type="term" value="F:calcium ion binding"/>
    <property type="evidence" value="ECO:0000314"/>
    <property type="project" value="TAIR"/>
</dbReference>
<dbReference type="CDD" id="cd00051">
    <property type="entry name" value="EFh"/>
    <property type="match status" value="1"/>
</dbReference>
<dbReference type="FunFam" id="1.10.238.10:FF:000235">
    <property type="entry name" value="Probable calcium-binding protein CML15"/>
    <property type="match status" value="1"/>
</dbReference>
<dbReference type="FunFam" id="1.10.238.10:FF:000123">
    <property type="entry name" value="probable calcium-binding protein CML18"/>
    <property type="match status" value="1"/>
</dbReference>
<dbReference type="Gene3D" id="1.10.238.10">
    <property type="entry name" value="EF-hand"/>
    <property type="match status" value="2"/>
</dbReference>
<dbReference type="InterPro" id="IPR050230">
    <property type="entry name" value="CALM/Myosin/TropC-like"/>
</dbReference>
<dbReference type="InterPro" id="IPR011992">
    <property type="entry name" value="EF-hand-dom_pair"/>
</dbReference>
<dbReference type="InterPro" id="IPR018247">
    <property type="entry name" value="EF_Hand_1_Ca_BS"/>
</dbReference>
<dbReference type="InterPro" id="IPR002048">
    <property type="entry name" value="EF_hand_dom"/>
</dbReference>
<dbReference type="PANTHER" id="PTHR23048:SF52">
    <property type="entry name" value="CALCIUM-BINDING PROTEIN CML18-RELATED"/>
    <property type="match status" value="1"/>
</dbReference>
<dbReference type="PANTHER" id="PTHR23048">
    <property type="entry name" value="MYOSIN LIGHT CHAIN 1, 3"/>
    <property type="match status" value="1"/>
</dbReference>
<dbReference type="Pfam" id="PF13499">
    <property type="entry name" value="EF-hand_7"/>
    <property type="match status" value="2"/>
</dbReference>
<dbReference type="SMART" id="SM00054">
    <property type="entry name" value="EFh"/>
    <property type="match status" value="4"/>
</dbReference>
<dbReference type="SUPFAM" id="SSF47473">
    <property type="entry name" value="EF-hand"/>
    <property type="match status" value="1"/>
</dbReference>
<dbReference type="PROSITE" id="PS00018">
    <property type="entry name" value="EF_HAND_1"/>
    <property type="match status" value="4"/>
</dbReference>
<dbReference type="PROSITE" id="PS50222">
    <property type="entry name" value="EF_HAND_2"/>
    <property type="match status" value="4"/>
</dbReference>
<protein>
    <recommendedName>
        <fullName>Probable calcium-binding protein CML15</fullName>
    </recommendedName>
    <alternativeName>
        <fullName>Calmodulin-like protein 15</fullName>
    </alternativeName>
</protein>
<proteinExistence type="evidence at transcript level"/>
<reference key="1">
    <citation type="journal article" date="2000" name="Nature">
        <title>Sequence and analysis of chromosome 1 of the plant Arabidopsis thaliana.</title>
        <authorList>
            <person name="Theologis A."/>
            <person name="Ecker J.R."/>
            <person name="Palm C.J."/>
            <person name="Federspiel N.A."/>
            <person name="Kaul S."/>
            <person name="White O."/>
            <person name="Alonso J."/>
            <person name="Altafi H."/>
            <person name="Araujo R."/>
            <person name="Bowman C.L."/>
            <person name="Brooks S.Y."/>
            <person name="Buehler E."/>
            <person name="Chan A."/>
            <person name="Chao Q."/>
            <person name="Chen H."/>
            <person name="Cheuk R.F."/>
            <person name="Chin C.W."/>
            <person name="Chung M.K."/>
            <person name="Conn L."/>
            <person name="Conway A.B."/>
            <person name="Conway A.R."/>
            <person name="Creasy T.H."/>
            <person name="Dewar K."/>
            <person name="Dunn P."/>
            <person name="Etgu P."/>
            <person name="Feldblyum T.V."/>
            <person name="Feng J.-D."/>
            <person name="Fong B."/>
            <person name="Fujii C.Y."/>
            <person name="Gill J.E."/>
            <person name="Goldsmith A.D."/>
            <person name="Haas B."/>
            <person name="Hansen N.F."/>
            <person name="Hughes B."/>
            <person name="Huizar L."/>
            <person name="Hunter J.L."/>
            <person name="Jenkins J."/>
            <person name="Johnson-Hopson C."/>
            <person name="Khan S."/>
            <person name="Khaykin E."/>
            <person name="Kim C.J."/>
            <person name="Koo H.L."/>
            <person name="Kremenetskaia I."/>
            <person name="Kurtz D.B."/>
            <person name="Kwan A."/>
            <person name="Lam B."/>
            <person name="Langin-Hooper S."/>
            <person name="Lee A."/>
            <person name="Lee J.M."/>
            <person name="Lenz C.A."/>
            <person name="Li J.H."/>
            <person name="Li Y.-P."/>
            <person name="Lin X."/>
            <person name="Liu S.X."/>
            <person name="Liu Z.A."/>
            <person name="Luros J.S."/>
            <person name="Maiti R."/>
            <person name="Marziali A."/>
            <person name="Militscher J."/>
            <person name="Miranda M."/>
            <person name="Nguyen M."/>
            <person name="Nierman W.C."/>
            <person name="Osborne B.I."/>
            <person name="Pai G."/>
            <person name="Peterson J."/>
            <person name="Pham P.K."/>
            <person name="Rizzo M."/>
            <person name="Rooney T."/>
            <person name="Rowley D."/>
            <person name="Sakano H."/>
            <person name="Salzberg S.L."/>
            <person name="Schwartz J.R."/>
            <person name="Shinn P."/>
            <person name="Southwick A.M."/>
            <person name="Sun H."/>
            <person name="Tallon L.J."/>
            <person name="Tambunga G."/>
            <person name="Toriumi M.J."/>
            <person name="Town C.D."/>
            <person name="Utterback T."/>
            <person name="Van Aken S."/>
            <person name="Vaysberg M."/>
            <person name="Vysotskaia V.S."/>
            <person name="Walker M."/>
            <person name="Wu D."/>
            <person name="Yu G."/>
            <person name="Fraser C.M."/>
            <person name="Venter J.C."/>
            <person name="Davis R.W."/>
        </authorList>
    </citation>
    <scope>NUCLEOTIDE SEQUENCE [LARGE SCALE GENOMIC DNA]</scope>
    <source>
        <strain>cv. Columbia</strain>
    </source>
</reference>
<reference key="2">
    <citation type="journal article" date="2017" name="Plant J.">
        <title>Araport11: a complete reannotation of the Arabidopsis thaliana reference genome.</title>
        <authorList>
            <person name="Cheng C.Y."/>
            <person name="Krishnakumar V."/>
            <person name="Chan A.P."/>
            <person name="Thibaud-Nissen F."/>
            <person name="Schobel S."/>
            <person name="Town C.D."/>
        </authorList>
    </citation>
    <scope>GENOME REANNOTATION</scope>
    <source>
        <strain>cv. Columbia</strain>
    </source>
</reference>
<reference key="3">
    <citation type="submission" date="2005-05" db="EMBL/GenBank/DDBJ databases">
        <authorList>
            <person name="Underwood B.A."/>
            <person name="Xiao Y.-L."/>
            <person name="Moskal W.A. Jr."/>
            <person name="Monaghan E.L."/>
            <person name="Wang W."/>
            <person name="Redman J.C."/>
            <person name="Wu H.C."/>
            <person name="Utterback T."/>
            <person name="Town C.D."/>
        </authorList>
    </citation>
    <scope>NUCLEOTIDE SEQUENCE [LARGE SCALE MRNA]</scope>
    <source>
        <strain>cv. Columbia</strain>
    </source>
</reference>
<reference key="4">
    <citation type="journal article" date="2003" name="New Phytol.">
        <title>Calmodulins and related potential calcium sensors of Arabidopsis.</title>
        <authorList>
            <person name="McCormack E."/>
            <person name="Braam J."/>
        </authorList>
    </citation>
    <scope>GENE FAMILY</scope>
    <scope>NOMENCLATURE</scope>
</reference>